<gene>
    <name evidence="1" type="primary">groEL</name>
    <name evidence="1" type="synonym">groL</name>
    <name type="ordered locus">AZOSEA06270</name>
    <name type="ORF">ebA1185</name>
</gene>
<dbReference type="EC" id="5.6.1.7" evidence="1"/>
<dbReference type="EMBL" id="CR555306">
    <property type="protein sequence ID" value="CAI06749.1"/>
    <property type="molecule type" value="Genomic_DNA"/>
</dbReference>
<dbReference type="RefSeq" id="WP_011236479.1">
    <property type="nucleotide sequence ID" value="NC_006513.1"/>
</dbReference>
<dbReference type="SMR" id="Q5P7G2"/>
<dbReference type="STRING" id="76114.ebA1185"/>
<dbReference type="KEGG" id="eba:ebA1185"/>
<dbReference type="eggNOG" id="COG0459">
    <property type="taxonomic scope" value="Bacteria"/>
</dbReference>
<dbReference type="HOGENOM" id="CLU_016503_3_0_4"/>
<dbReference type="OrthoDB" id="9766614at2"/>
<dbReference type="Proteomes" id="UP000006552">
    <property type="component" value="Chromosome"/>
</dbReference>
<dbReference type="GO" id="GO:0005737">
    <property type="term" value="C:cytoplasm"/>
    <property type="evidence" value="ECO:0007669"/>
    <property type="project" value="UniProtKB-SubCell"/>
</dbReference>
<dbReference type="GO" id="GO:0005524">
    <property type="term" value="F:ATP binding"/>
    <property type="evidence" value="ECO:0007669"/>
    <property type="project" value="UniProtKB-UniRule"/>
</dbReference>
<dbReference type="GO" id="GO:0140662">
    <property type="term" value="F:ATP-dependent protein folding chaperone"/>
    <property type="evidence" value="ECO:0007669"/>
    <property type="project" value="InterPro"/>
</dbReference>
<dbReference type="GO" id="GO:0016853">
    <property type="term" value="F:isomerase activity"/>
    <property type="evidence" value="ECO:0007669"/>
    <property type="project" value="UniProtKB-KW"/>
</dbReference>
<dbReference type="GO" id="GO:0051082">
    <property type="term" value="F:unfolded protein binding"/>
    <property type="evidence" value="ECO:0007669"/>
    <property type="project" value="UniProtKB-UniRule"/>
</dbReference>
<dbReference type="GO" id="GO:0042026">
    <property type="term" value="P:protein refolding"/>
    <property type="evidence" value="ECO:0007669"/>
    <property type="project" value="UniProtKB-UniRule"/>
</dbReference>
<dbReference type="CDD" id="cd03344">
    <property type="entry name" value="GroEL"/>
    <property type="match status" value="1"/>
</dbReference>
<dbReference type="FunFam" id="1.10.560.10:FF:000001">
    <property type="entry name" value="60 kDa chaperonin"/>
    <property type="match status" value="1"/>
</dbReference>
<dbReference type="FunFam" id="3.50.7.10:FF:000001">
    <property type="entry name" value="60 kDa chaperonin"/>
    <property type="match status" value="1"/>
</dbReference>
<dbReference type="Gene3D" id="3.50.7.10">
    <property type="entry name" value="GroEL"/>
    <property type="match status" value="1"/>
</dbReference>
<dbReference type="Gene3D" id="1.10.560.10">
    <property type="entry name" value="GroEL-like equatorial domain"/>
    <property type="match status" value="1"/>
</dbReference>
<dbReference type="Gene3D" id="3.30.260.10">
    <property type="entry name" value="TCP-1-like chaperonin intermediate domain"/>
    <property type="match status" value="1"/>
</dbReference>
<dbReference type="HAMAP" id="MF_00600">
    <property type="entry name" value="CH60"/>
    <property type="match status" value="1"/>
</dbReference>
<dbReference type="InterPro" id="IPR018370">
    <property type="entry name" value="Chaperonin_Cpn60_CS"/>
</dbReference>
<dbReference type="InterPro" id="IPR001844">
    <property type="entry name" value="Cpn60/GroEL"/>
</dbReference>
<dbReference type="InterPro" id="IPR002423">
    <property type="entry name" value="Cpn60/GroEL/TCP-1"/>
</dbReference>
<dbReference type="InterPro" id="IPR027409">
    <property type="entry name" value="GroEL-like_apical_dom_sf"/>
</dbReference>
<dbReference type="InterPro" id="IPR027413">
    <property type="entry name" value="GROEL-like_equatorial_sf"/>
</dbReference>
<dbReference type="InterPro" id="IPR027410">
    <property type="entry name" value="TCP-1-like_intermed_sf"/>
</dbReference>
<dbReference type="NCBIfam" id="TIGR02348">
    <property type="entry name" value="GroEL"/>
    <property type="match status" value="1"/>
</dbReference>
<dbReference type="NCBIfam" id="NF000592">
    <property type="entry name" value="PRK00013.1"/>
    <property type="match status" value="1"/>
</dbReference>
<dbReference type="NCBIfam" id="NF009487">
    <property type="entry name" value="PRK12849.1"/>
    <property type="match status" value="1"/>
</dbReference>
<dbReference type="NCBIfam" id="NF009488">
    <property type="entry name" value="PRK12850.1"/>
    <property type="match status" value="1"/>
</dbReference>
<dbReference type="NCBIfam" id="NF009489">
    <property type="entry name" value="PRK12851.1"/>
    <property type="match status" value="1"/>
</dbReference>
<dbReference type="PANTHER" id="PTHR45633">
    <property type="entry name" value="60 KDA HEAT SHOCK PROTEIN, MITOCHONDRIAL"/>
    <property type="match status" value="1"/>
</dbReference>
<dbReference type="Pfam" id="PF00118">
    <property type="entry name" value="Cpn60_TCP1"/>
    <property type="match status" value="1"/>
</dbReference>
<dbReference type="PRINTS" id="PR00298">
    <property type="entry name" value="CHAPERONIN60"/>
</dbReference>
<dbReference type="SUPFAM" id="SSF52029">
    <property type="entry name" value="GroEL apical domain-like"/>
    <property type="match status" value="1"/>
</dbReference>
<dbReference type="SUPFAM" id="SSF48592">
    <property type="entry name" value="GroEL equatorial domain-like"/>
    <property type="match status" value="1"/>
</dbReference>
<dbReference type="SUPFAM" id="SSF54849">
    <property type="entry name" value="GroEL-intermediate domain like"/>
    <property type="match status" value="1"/>
</dbReference>
<dbReference type="PROSITE" id="PS00296">
    <property type="entry name" value="CHAPERONINS_CPN60"/>
    <property type="match status" value="1"/>
</dbReference>
<feature type="chain" id="PRO_0000063265" description="Chaperonin GroEL">
    <location>
        <begin position="1"/>
        <end position="550"/>
    </location>
</feature>
<feature type="binding site" evidence="1">
    <location>
        <begin position="30"/>
        <end position="33"/>
    </location>
    <ligand>
        <name>ATP</name>
        <dbReference type="ChEBI" id="CHEBI:30616"/>
    </ligand>
</feature>
<feature type="binding site" evidence="1">
    <location>
        <position position="51"/>
    </location>
    <ligand>
        <name>ATP</name>
        <dbReference type="ChEBI" id="CHEBI:30616"/>
    </ligand>
</feature>
<feature type="binding site" evidence="1">
    <location>
        <begin position="87"/>
        <end position="91"/>
    </location>
    <ligand>
        <name>ATP</name>
        <dbReference type="ChEBI" id="CHEBI:30616"/>
    </ligand>
</feature>
<feature type="binding site" evidence="1">
    <location>
        <position position="415"/>
    </location>
    <ligand>
        <name>ATP</name>
        <dbReference type="ChEBI" id="CHEBI:30616"/>
    </ligand>
</feature>
<feature type="binding site" evidence="1">
    <location>
        <begin position="479"/>
        <end position="481"/>
    </location>
    <ligand>
        <name>ATP</name>
        <dbReference type="ChEBI" id="CHEBI:30616"/>
    </ligand>
</feature>
<feature type="binding site" evidence="1">
    <location>
        <position position="495"/>
    </location>
    <ligand>
        <name>ATP</name>
        <dbReference type="ChEBI" id="CHEBI:30616"/>
    </ligand>
</feature>
<accession>Q5P7G2</accession>
<sequence>MAAKEVKFGDSARDRMVAGVNILANAVKVTLGPKGRNVVLERSFGAPTVTKDGVSVAKEIELKDKFENMGAQMVKEVASKTSDIAGDGTTTATVLAQSIVREGMKFVAAGMNPMDLKRGIDKAVIAVTEELKKLSKPCSTNKEIAQVGSISANSDADIGEIIAKSMDKVGKEGVITVEDGKSLQNELDVVEGMQFDRGYLSPYFINNPDKQVAILENPFILLFDKKISNIRDLLPVLEQVAKAGRPLLIVAEDVEGEALATLVVNNIRGILKTCSVKAPGFGDRRKAMLEDIAVLTGGQVIAEEVGLTLEKATLAELGQAARIEIGKENTIIIDGAGEGSRIEGRVKQIRAQIEEATSDYDREKLQERVAKLAGGVAVIKVGAATEVEMKEKKARVEDALHATRAAVEEGIVPGGGVALLRARANLGTLKGDNHDQDAGIKIVLRALEQPLREIVANAGDEPSVVVNRVVEGTGNFGYNAATGEYGDLVDMGVLDPTKVERIALQNAASVAGLMLTTDCMVGELAEEKPSMGGMGGMGGMGGMGGMDMGM</sequence>
<keyword id="KW-0067">ATP-binding</keyword>
<keyword id="KW-0143">Chaperone</keyword>
<keyword id="KW-0963">Cytoplasm</keyword>
<keyword id="KW-0413">Isomerase</keyword>
<keyword id="KW-0547">Nucleotide-binding</keyword>
<keyword id="KW-1185">Reference proteome</keyword>
<protein>
    <recommendedName>
        <fullName evidence="1">Chaperonin GroEL</fullName>
        <ecNumber evidence="1">5.6.1.7</ecNumber>
    </recommendedName>
    <alternativeName>
        <fullName evidence="1">60 kDa chaperonin</fullName>
    </alternativeName>
    <alternativeName>
        <fullName evidence="1">Chaperonin-60</fullName>
        <shortName evidence="1">Cpn60</shortName>
    </alternativeName>
</protein>
<name>CH60_AROAE</name>
<comment type="function">
    <text evidence="1">Together with its co-chaperonin GroES, plays an essential role in assisting protein folding. The GroEL-GroES system forms a nano-cage that allows encapsulation of the non-native substrate proteins and provides a physical environment optimized to promote and accelerate protein folding.</text>
</comment>
<comment type="catalytic activity">
    <reaction evidence="1">
        <text>ATP + H2O + a folded polypeptide = ADP + phosphate + an unfolded polypeptide.</text>
        <dbReference type="EC" id="5.6.1.7"/>
    </reaction>
</comment>
<comment type="subunit">
    <text evidence="1">Forms a cylinder of 14 subunits composed of two heptameric rings stacked back-to-back. Interacts with the co-chaperonin GroES.</text>
</comment>
<comment type="subcellular location">
    <subcellularLocation>
        <location evidence="1">Cytoplasm</location>
    </subcellularLocation>
</comment>
<comment type="similarity">
    <text evidence="1">Belongs to the chaperonin (HSP60) family.</text>
</comment>
<organism>
    <name type="scientific">Aromatoleum aromaticum (strain DSM 19018 / LMG 30748 / EbN1)</name>
    <name type="common">Azoarcus sp. (strain EbN1)</name>
    <dbReference type="NCBI Taxonomy" id="76114"/>
    <lineage>
        <taxon>Bacteria</taxon>
        <taxon>Pseudomonadati</taxon>
        <taxon>Pseudomonadota</taxon>
        <taxon>Betaproteobacteria</taxon>
        <taxon>Rhodocyclales</taxon>
        <taxon>Rhodocyclaceae</taxon>
        <taxon>Aromatoleum</taxon>
    </lineage>
</organism>
<proteinExistence type="inferred from homology"/>
<reference key="1">
    <citation type="journal article" date="2005" name="Arch. Microbiol.">
        <title>The genome sequence of an anaerobic aromatic-degrading denitrifying bacterium, strain EbN1.</title>
        <authorList>
            <person name="Rabus R."/>
            <person name="Kube M."/>
            <person name="Heider J."/>
            <person name="Beck A."/>
            <person name="Heitmann K."/>
            <person name="Widdel F."/>
            <person name="Reinhardt R."/>
        </authorList>
    </citation>
    <scope>NUCLEOTIDE SEQUENCE [LARGE SCALE GENOMIC DNA]</scope>
    <source>
        <strain>DSM 19018 / LMG 30748 / EbN1</strain>
    </source>
</reference>
<evidence type="ECO:0000255" key="1">
    <source>
        <dbReference type="HAMAP-Rule" id="MF_00600"/>
    </source>
</evidence>